<dbReference type="EMBL" id="AY358198">
    <property type="protein sequence ID" value="AAQ88565.1"/>
    <property type="molecule type" value="mRNA"/>
</dbReference>
<dbReference type="EMBL" id="AL592426">
    <property type="status" value="NOT_ANNOTATED_CDS"/>
    <property type="molecule type" value="Genomic_DNA"/>
</dbReference>
<dbReference type="CCDS" id="CCDS4957.1"/>
<dbReference type="RefSeq" id="NP_997293.2">
    <property type="nucleotide sequence ID" value="NM_207410.2"/>
</dbReference>
<dbReference type="PDB" id="5VZ4">
    <property type="method" value="X-ray"/>
    <property type="resolution" value="2.20 A"/>
    <property type="chains" value="B=115-351"/>
</dbReference>
<dbReference type="PDB" id="6Q2J">
    <property type="method" value="EM"/>
    <property type="resolution" value="4.10 A"/>
    <property type="chains" value="C/D=20-352"/>
</dbReference>
<dbReference type="PDB" id="6WMW">
    <property type="method" value="X-ray"/>
    <property type="resolution" value="2.91 A"/>
    <property type="chains" value="B=115-351"/>
</dbReference>
<dbReference type="PDBsum" id="5VZ4"/>
<dbReference type="PDBsum" id="6Q2J"/>
<dbReference type="PDBsum" id="6WMW"/>
<dbReference type="EMDB" id="EMD-11777"/>
<dbReference type="EMDB" id="EMD-20572"/>
<dbReference type="SMR" id="Q6UXV0"/>
<dbReference type="BioGRID" id="133131">
    <property type="interactions" value="2"/>
</dbReference>
<dbReference type="CORUM" id="Q6UXV0"/>
<dbReference type="FunCoup" id="Q6UXV0">
    <property type="interactions" value="3"/>
</dbReference>
<dbReference type="IntAct" id="Q6UXV0">
    <property type="interactions" value="1"/>
</dbReference>
<dbReference type="STRING" id="9606.ENSP00000343636"/>
<dbReference type="BindingDB" id="Q6UXV0"/>
<dbReference type="ChEMBL" id="CHEMBL5465268"/>
<dbReference type="GuidetoPHARMACOLOGY" id="2977"/>
<dbReference type="GlyCosmos" id="Q6UXV0">
    <property type="glycosylation" value="6 sites, No reported glycans"/>
</dbReference>
<dbReference type="GlyGen" id="Q6UXV0">
    <property type="glycosylation" value="6 sites"/>
</dbReference>
<dbReference type="BioMuta" id="GFRAL"/>
<dbReference type="DMDM" id="108935991"/>
<dbReference type="PaxDb" id="9606-ENSP00000343636"/>
<dbReference type="Antibodypedia" id="54700">
    <property type="antibodies" value="137 antibodies from 20 providers"/>
</dbReference>
<dbReference type="DNASU" id="389400"/>
<dbReference type="Ensembl" id="ENST00000340465.2">
    <property type="protein sequence ID" value="ENSP00000343636.2"/>
    <property type="gene ID" value="ENSG00000187871.2"/>
</dbReference>
<dbReference type="GeneID" id="389400"/>
<dbReference type="KEGG" id="hsa:389400"/>
<dbReference type="MANE-Select" id="ENST00000340465.2">
    <property type="protein sequence ID" value="ENSP00000343636.2"/>
    <property type="RefSeq nucleotide sequence ID" value="NM_207410.2"/>
    <property type="RefSeq protein sequence ID" value="NP_997293.2"/>
</dbReference>
<dbReference type="UCSC" id="uc003pcm.1">
    <property type="organism name" value="human"/>
</dbReference>
<dbReference type="AGR" id="HGNC:32789"/>
<dbReference type="CTD" id="389400"/>
<dbReference type="DisGeNET" id="389400"/>
<dbReference type="GeneCards" id="GFRAL"/>
<dbReference type="HGNC" id="HGNC:32789">
    <property type="gene designation" value="GFRAL"/>
</dbReference>
<dbReference type="HPA" id="ENSG00000187871">
    <property type="expression patterns" value="Not detected"/>
</dbReference>
<dbReference type="MIM" id="617837">
    <property type="type" value="gene"/>
</dbReference>
<dbReference type="neXtProt" id="NX_Q6UXV0"/>
<dbReference type="PharmGKB" id="PA145008357"/>
<dbReference type="VEuPathDB" id="HostDB:ENSG00000187871"/>
<dbReference type="eggNOG" id="ENOG502RCJT">
    <property type="taxonomic scope" value="Eukaryota"/>
</dbReference>
<dbReference type="GeneTree" id="ENSGT00730000111274"/>
<dbReference type="HOGENOM" id="CLU_058745_1_0_1"/>
<dbReference type="InParanoid" id="Q6UXV0"/>
<dbReference type="OMA" id="NVIHSCR"/>
<dbReference type="OrthoDB" id="8735237at2759"/>
<dbReference type="PAN-GO" id="Q6UXV0">
    <property type="GO annotations" value="4 GO annotations based on evolutionary models"/>
</dbReference>
<dbReference type="PhylomeDB" id="Q6UXV0"/>
<dbReference type="TreeFam" id="TF331647"/>
<dbReference type="PathwayCommons" id="Q6UXV0"/>
<dbReference type="BioGRID-ORCS" id="389400">
    <property type="hits" value="10 hits in 1146 CRISPR screens"/>
</dbReference>
<dbReference type="GenomeRNAi" id="389400"/>
<dbReference type="Pharos" id="Q6UXV0">
    <property type="development level" value="Tbio"/>
</dbReference>
<dbReference type="PRO" id="PR:Q6UXV0"/>
<dbReference type="Proteomes" id="UP000005640">
    <property type="component" value="Chromosome 6"/>
</dbReference>
<dbReference type="RNAct" id="Q6UXV0">
    <property type="molecule type" value="protein"/>
</dbReference>
<dbReference type="Bgee" id="ENSG00000187871">
    <property type="expression patterns" value="Expressed in male germ line stem cell (sensu Vertebrata) in testis and 5 other cell types or tissues"/>
</dbReference>
<dbReference type="GO" id="GO:0015629">
    <property type="term" value="C:actin cytoskeleton"/>
    <property type="evidence" value="ECO:0000314"/>
    <property type="project" value="HPA"/>
</dbReference>
<dbReference type="GO" id="GO:0009897">
    <property type="term" value="C:external side of plasma membrane"/>
    <property type="evidence" value="ECO:0000318"/>
    <property type="project" value="GO_Central"/>
</dbReference>
<dbReference type="GO" id="GO:0005925">
    <property type="term" value="C:focal adhesion"/>
    <property type="evidence" value="ECO:0000314"/>
    <property type="project" value="HPA"/>
</dbReference>
<dbReference type="GO" id="GO:0005654">
    <property type="term" value="C:nucleoplasm"/>
    <property type="evidence" value="ECO:0000314"/>
    <property type="project" value="HPA"/>
</dbReference>
<dbReference type="GO" id="GO:0005886">
    <property type="term" value="C:plasma membrane"/>
    <property type="evidence" value="ECO:0000314"/>
    <property type="project" value="UniProtKB"/>
</dbReference>
<dbReference type="GO" id="GO:0043235">
    <property type="term" value="C:receptor complex"/>
    <property type="evidence" value="ECO:0000318"/>
    <property type="project" value="GO_Central"/>
</dbReference>
<dbReference type="GO" id="GO:0016167">
    <property type="term" value="F:glial cell-derived neurotrophic factor receptor activity"/>
    <property type="evidence" value="ECO:0000314"/>
    <property type="project" value="UniProtKB"/>
</dbReference>
<dbReference type="GO" id="GO:0005179">
    <property type="term" value="F:hormone activity"/>
    <property type="evidence" value="ECO:0007669"/>
    <property type="project" value="UniProtKB-KW"/>
</dbReference>
<dbReference type="GO" id="GO:0030971">
    <property type="term" value="F:receptor tyrosine kinase binding"/>
    <property type="evidence" value="ECO:0000353"/>
    <property type="project" value="UniProtKB"/>
</dbReference>
<dbReference type="GO" id="GO:0038023">
    <property type="term" value="F:signaling receptor activity"/>
    <property type="evidence" value="ECO:0000318"/>
    <property type="project" value="GO_Central"/>
</dbReference>
<dbReference type="GO" id="GO:0160144">
    <property type="term" value="P:GDF15-GFRAL signaling pathway"/>
    <property type="evidence" value="ECO:0000314"/>
    <property type="project" value="UniProtKB"/>
</dbReference>
<dbReference type="GO" id="GO:0032099">
    <property type="term" value="P:negative regulation of appetite"/>
    <property type="evidence" value="ECO:0000250"/>
    <property type="project" value="UniProtKB"/>
</dbReference>
<dbReference type="GO" id="GO:2001240">
    <property type="term" value="P:negative regulation of extrinsic apoptotic signaling pathway in absence of ligand"/>
    <property type="evidence" value="ECO:0007669"/>
    <property type="project" value="Ensembl"/>
</dbReference>
<dbReference type="GO" id="GO:0043524">
    <property type="term" value="P:negative regulation of neuron apoptotic process"/>
    <property type="evidence" value="ECO:0007669"/>
    <property type="project" value="Ensembl"/>
</dbReference>
<dbReference type="GO" id="GO:0007399">
    <property type="term" value="P:nervous system development"/>
    <property type="evidence" value="ECO:0000318"/>
    <property type="project" value="GO_Central"/>
</dbReference>
<dbReference type="GO" id="GO:0043410">
    <property type="term" value="P:positive regulation of MAPK cascade"/>
    <property type="evidence" value="ECO:0000314"/>
    <property type="project" value="UniProtKB"/>
</dbReference>
<dbReference type="GO" id="GO:0051897">
    <property type="term" value="P:positive regulation of phosphatidylinositol 3-kinase/protein kinase B signal transduction"/>
    <property type="evidence" value="ECO:0000314"/>
    <property type="project" value="UniProtKB"/>
</dbReference>
<dbReference type="GO" id="GO:0002023">
    <property type="term" value="P:reduction of food intake in response to dietary excess"/>
    <property type="evidence" value="ECO:0000250"/>
    <property type="project" value="UniProtKB"/>
</dbReference>
<dbReference type="GO" id="GO:1901558">
    <property type="term" value="P:response to metformin"/>
    <property type="evidence" value="ECO:0007669"/>
    <property type="project" value="Ensembl"/>
</dbReference>
<dbReference type="GO" id="GO:0031098">
    <property type="term" value="P:stress-activated protein kinase signaling cascade"/>
    <property type="evidence" value="ECO:0007669"/>
    <property type="project" value="Ensembl"/>
</dbReference>
<dbReference type="InterPro" id="IPR016017">
    <property type="entry name" value="GDNF/GAS1"/>
</dbReference>
<dbReference type="InterPro" id="IPR037193">
    <property type="entry name" value="GDNF_alpha"/>
</dbReference>
<dbReference type="InterPro" id="IPR003438">
    <property type="entry name" value="GDNF_rcpt"/>
</dbReference>
<dbReference type="PANTHER" id="PTHR10269:SF1">
    <property type="entry name" value="GDNF FAMILY RECEPTOR ALPHA-LIKE"/>
    <property type="match status" value="1"/>
</dbReference>
<dbReference type="PANTHER" id="PTHR10269">
    <property type="entry name" value="GDNF RECEPTOR ALPHA"/>
    <property type="match status" value="1"/>
</dbReference>
<dbReference type="Pfam" id="PF02351">
    <property type="entry name" value="GDNF"/>
    <property type="match status" value="2"/>
</dbReference>
<dbReference type="SMART" id="SM00907">
    <property type="entry name" value="GDNF"/>
    <property type="match status" value="3"/>
</dbReference>
<dbReference type="SUPFAM" id="SSF110035">
    <property type="entry name" value="GDNF receptor-like"/>
    <property type="match status" value="2"/>
</dbReference>
<comment type="function">
    <text evidence="1 5 6 7 8 9 10 12">Brainstem-restricted receptor for GDF15 hormone, which triggers an aversive response, characterized by nausea, vomiting, and/or loss of appetite in response to various stresses (PubMed:28846097, PubMed:28846098, PubMed:28846099, PubMed:28953886, PubMed:36630958). The aversive response is both required to reduce continuing exposure to those stresses at the time of exposure and to promote avoidance behavior in the future (PubMed:28846097, PubMed:28846098, PubMed:28846099, PubMed:28953886, PubMed:36630958). The GDF15-GFRAL aversive response is triggered by stresses, such as anticancer drugs (camptothecin or cisplatin), cancers or drugs such as metformin (PubMed:32661391). Upon interaction with its ligand, GDF15, mediates the GDF15-induced autophosphorylation and activation of the RET tyrosine kinase receptor, leading to activation of MAPK- and AKT- signaling pathways (PubMed:31535977, PubMed:32661391). Ligand-binding activates GFRAL-expressing neurons localized in the area postrema and nucleus tractus solitarius of the brainstem (By similarity). The GDF15-GFRAL signal induces expression of genes involved in metabolism, such as lipid metabolism in adipose tissues (PubMed:32661391).</text>
</comment>
<comment type="activity regulation">
    <text evidence="10 12">Specifically inhibited by 3P10 monoclonal antibody (PubMed:32661391). Strongly activated by LY3463251, a long-acting and stable agonist composed of GDF15 conjugated monomeric human IgG4 Fc (PubMed:36630958).</text>
</comment>
<comment type="subunit">
    <text evidence="5 7 8 9">Interacts (via the extracellular domain) with GDF15 and RET; receptor of GDF15, mediates cellular signaling through interaction with RET after GDF15-binding (PubMed:28846097, PubMed:28846099, PubMed:28953886, PubMed:31535977). Interaction with RET requires previous GDF15-binding (PubMed:28846097, PubMed:28846099).</text>
</comment>
<comment type="interaction">
    <interactant intactId="EBI-27112718">
        <id>Q6UXV0</id>
    </interactant>
    <interactant intactId="EBI-2116863">
        <id>Q99988</id>
        <label>GDF15</label>
    </interactant>
    <organismsDiffer>false</organismsDiffer>
    <experiments>2</experiments>
</comment>
<comment type="subcellular location">
    <subcellularLocation>
        <location evidence="8">Cell membrane</location>
        <topology evidence="8">Single-pass membrane protein</topology>
        <orientation evidence="8">Extracellular side</orientation>
    </subcellularLocation>
</comment>
<comment type="tissue specificity">
    <text evidence="5 6">Expressed in the brainstem, restricted to cells in the area postrema and the immediately adjacent region of the nucleus tractus solitarius (at protein level) (PubMed:28846097, PubMed:28846098). Detected at low levels in testis and adipose tissue (PubMed:28846097).</text>
</comment>
<comment type="PTM">
    <text evidence="11">Cleaved and inactivated by MMP14, inhibiting the GDF15-GFRAL aversive response.</text>
</comment>
<comment type="similarity">
    <text evidence="15">Belongs to the GDNFR family.</text>
</comment>
<gene>
    <name evidence="14 16" type="primary">GFRAL</name>
    <name evidence="16" type="synonym">C6orf144</name>
    <name evidence="13" type="ORF">UNQ9356/PRO34128</name>
</gene>
<organism>
    <name type="scientific">Homo sapiens</name>
    <name type="common">Human</name>
    <dbReference type="NCBI Taxonomy" id="9606"/>
    <lineage>
        <taxon>Eukaryota</taxon>
        <taxon>Metazoa</taxon>
        <taxon>Chordata</taxon>
        <taxon>Craniata</taxon>
        <taxon>Vertebrata</taxon>
        <taxon>Euteleostomi</taxon>
        <taxon>Mammalia</taxon>
        <taxon>Eutheria</taxon>
        <taxon>Euarchontoglires</taxon>
        <taxon>Primates</taxon>
        <taxon>Haplorrhini</taxon>
        <taxon>Catarrhini</taxon>
        <taxon>Hominidae</taxon>
        <taxon>Homo</taxon>
    </lineage>
</organism>
<sequence>MIVFIFLAMGLSLENEYTSQTNNCTYLREQCLRDANGCKHAWRVMEDACNDSDPGDPCKMRNSSYCNLSIQYLVESNFQFKECLCTDDFYCTVNKLLGKKCINKSDNVKEDKFKWNLTTRSHHGFKGMWSCLEVAEACVGDVVCNAQLASYLKACSANGNPCDLKQCQAAIRFFYQNIPFNIAQMLAFCDCAQSDIPCQQSKEALHSKTCAVNMVPPPTCLSVIRSCQNDELCRRHYRTFQSKCWQRVTRKCHEDENCISTLSKQDLTCSGSDDCKAAYIDILGTVLQVQCTCRTITQSEESLCKIFQHMLHRKSCFNYPTLSNVKGMALYTRKHANKITLTGFHSPFNGEVIYAAMCMTVTCGILLLVMVKLRTSRISSKARDPSSIQIPGEL</sequence>
<name>GFRAL_HUMAN</name>
<accession>Q6UXV0</accession>
<accession>Q5VTF6</accession>
<proteinExistence type="evidence at protein level"/>
<feature type="signal peptide" evidence="2">
    <location>
        <begin position="1"/>
        <end position="18"/>
    </location>
</feature>
<feature type="chain" id="PRO_0000240124" description="GDNF family receptor alpha-like">
    <location>
        <begin position="19"/>
        <end position="394"/>
    </location>
</feature>
<feature type="topological domain" description="Extracellular" evidence="2">
    <location>
        <begin position="19"/>
        <end position="351"/>
    </location>
</feature>
<feature type="transmembrane region" description="Helical" evidence="2">
    <location>
        <begin position="352"/>
        <end position="371"/>
    </location>
</feature>
<feature type="topological domain" description="Cytoplasmic" evidence="2">
    <location>
        <begin position="372"/>
        <end position="394"/>
    </location>
</feature>
<feature type="region of interest" description="Required for interaction with GDF15" evidence="6">
    <location>
        <begin position="149"/>
        <end position="228"/>
    </location>
</feature>
<feature type="glycosylation site" description="N-linked (GlcNAc...) asparagine" evidence="2">
    <location>
        <position position="23"/>
    </location>
</feature>
<feature type="glycosylation site" description="N-linked (GlcNAc...) asparagine" evidence="2">
    <location>
        <position position="50"/>
    </location>
</feature>
<feature type="glycosylation site" description="N-linked (GlcNAc...) asparagine" evidence="2">
    <location>
        <position position="62"/>
    </location>
</feature>
<feature type="glycosylation site" description="N-linked (GlcNAc...) asparagine" evidence="2">
    <location>
        <position position="67"/>
    </location>
</feature>
<feature type="glycosylation site" description="N-linked (GlcNAc...) asparagine" evidence="2">
    <location>
        <position position="103"/>
    </location>
</feature>
<feature type="glycosylation site" description="N-linked (GlcNAc...) asparagine" evidence="2">
    <location>
        <position position="116"/>
    </location>
</feature>
<feature type="disulfide bond" evidence="8 9 10 17 18 19">
    <location>
        <begin position="131"/>
        <end position="189"/>
    </location>
</feature>
<feature type="disulfide bond" evidence="8 9 10 17 18 19">
    <location>
        <begin position="138"/>
        <end position="144"/>
    </location>
</feature>
<feature type="disulfide bond" evidence="8 9 10 17 18 19">
    <location>
        <begin position="155"/>
        <end position="167"/>
    </location>
</feature>
<feature type="disulfide bond" evidence="8 9 10 17 18 19">
    <location>
        <begin position="162"/>
        <end position="210"/>
    </location>
</feature>
<feature type="disulfide bond" evidence="8 9 10 17 18 19">
    <location>
        <begin position="191"/>
        <end position="198"/>
    </location>
</feature>
<feature type="disulfide bond" evidence="8 9 10 17 18 19">
    <location>
        <begin position="220"/>
        <end position="291"/>
    </location>
</feature>
<feature type="disulfide bond" evidence="8 9 10 17 18 19">
    <location>
        <begin position="227"/>
        <end position="233"/>
    </location>
</feature>
<feature type="disulfide bond" evidence="8 9 10 17 18 19">
    <location>
        <begin position="244"/>
        <end position="275"/>
    </location>
</feature>
<feature type="disulfide bond" evidence="8 9 10 17 18 19">
    <location>
        <begin position="252"/>
        <end position="258"/>
    </location>
</feature>
<feature type="disulfide bond" evidence="8 9 10 17 18 19">
    <location>
        <begin position="269"/>
        <end position="316"/>
    </location>
</feature>
<feature type="disulfide bond" evidence="8 9 10 17 18 19">
    <location>
        <begin position="293"/>
        <end position="304"/>
    </location>
</feature>
<feature type="sequence variant" id="VAR_053105" description="In dbSNP:rs12199003.">
    <original>R</original>
    <variation>C</variation>
    <location>
        <position position="33"/>
    </location>
</feature>
<feature type="sequence variant" id="VAR_036234" description="In a breast cancer sample; somatic mutation; dbSNP:rs1224725337." evidence="4">
    <original>D</original>
    <variation>H</variation>
    <location>
        <position position="195"/>
    </location>
</feature>
<feature type="sequence variant" id="VAR_053106" description="In dbSNP:rs9370418." evidence="3">
    <original>S</original>
    <variation>P</variation>
    <location>
        <position position="387"/>
    </location>
</feature>
<feature type="mutagenesis site" description="Abolished formation of a ternary complex with GDF15 and RET." evidence="9">
    <original>T</original>
    <variation>M</variation>
    <location>
        <position position="261"/>
    </location>
</feature>
<feature type="helix" evidence="20">
    <location>
        <begin position="131"/>
        <end position="139"/>
    </location>
</feature>
<feature type="helix" evidence="20">
    <location>
        <begin position="142"/>
        <end position="154"/>
    </location>
</feature>
<feature type="strand" evidence="20">
    <location>
        <begin position="156"/>
        <end position="161"/>
    </location>
</feature>
<feature type="helix" evidence="20">
    <location>
        <begin position="164"/>
        <end position="175"/>
    </location>
</feature>
<feature type="helix" evidence="20">
    <location>
        <begin position="180"/>
        <end position="188"/>
    </location>
</feature>
<feature type="helix" evidence="20">
    <location>
        <begin position="196"/>
        <end position="205"/>
    </location>
</feature>
<feature type="helix" evidence="20">
    <location>
        <begin position="208"/>
        <end position="211"/>
    </location>
</feature>
<feature type="helix" evidence="20">
    <location>
        <begin position="220"/>
        <end position="228"/>
    </location>
</feature>
<feature type="helix" evidence="20">
    <location>
        <begin position="231"/>
        <end position="244"/>
    </location>
</feature>
<feature type="helix" evidence="20">
    <location>
        <begin position="246"/>
        <end position="252"/>
    </location>
</feature>
<feature type="helix" evidence="20">
    <location>
        <begin position="256"/>
        <end position="260"/>
    </location>
</feature>
<feature type="turn" evidence="20">
    <location>
        <begin position="264"/>
        <end position="266"/>
    </location>
</feature>
<feature type="helix" evidence="20">
    <location>
        <begin position="273"/>
        <end position="280"/>
    </location>
</feature>
<feature type="turn" evidence="20">
    <location>
        <begin position="281"/>
        <end position="284"/>
    </location>
</feature>
<feature type="helix" evidence="20">
    <location>
        <begin position="286"/>
        <end position="288"/>
    </location>
</feature>
<feature type="turn" evidence="21">
    <location>
        <begin position="298"/>
        <end position="300"/>
    </location>
</feature>
<feature type="helix" evidence="20">
    <location>
        <begin position="301"/>
        <end position="311"/>
    </location>
</feature>
<feature type="helix" evidence="20">
    <location>
        <begin position="313"/>
        <end position="315"/>
    </location>
</feature>
<protein>
    <recommendedName>
        <fullName evidence="14">GDNF family receptor alpha-like</fullName>
    </recommendedName>
</protein>
<keyword id="KW-0002">3D-structure</keyword>
<keyword id="KW-1003">Cell membrane</keyword>
<keyword id="KW-1015">Disulfide bond</keyword>
<keyword id="KW-0325">Glycoprotein</keyword>
<keyword id="KW-0372">Hormone</keyword>
<keyword id="KW-0472">Membrane</keyword>
<keyword id="KW-0675">Receptor</keyword>
<keyword id="KW-1185">Reference proteome</keyword>
<keyword id="KW-0732">Signal</keyword>
<keyword id="KW-0812">Transmembrane</keyword>
<keyword id="KW-1133">Transmembrane helix</keyword>
<reference key="1">
    <citation type="journal article" date="2003" name="Genome Res.">
        <title>The secreted protein discovery initiative (SPDI), a large-scale effort to identify novel human secreted and transmembrane proteins: a bioinformatics assessment.</title>
        <authorList>
            <person name="Clark H.F."/>
            <person name="Gurney A.L."/>
            <person name="Abaya E."/>
            <person name="Baker K."/>
            <person name="Baldwin D.T."/>
            <person name="Brush J."/>
            <person name="Chen J."/>
            <person name="Chow B."/>
            <person name="Chui C."/>
            <person name="Crowley C."/>
            <person name="Currell B."/>
            <person name="Deuel B."/>
            <person name="Dowd P."/>
            <person name="Eaton D."/>
            <person name="Foster J.S."/>
            <person name="Grimaldi C."/>
            <person name="Gu Q."/>
            <person name="Hass P.E."/>
            <person name="Heldens S."/>
            <person name="Huang A."/>
            <person name="Kim H.S."/>
            <person name="Klimowski L."/>
            <person name="Jin Y."/>
            <person name="Johnson S."/>
            <person name="Lee J."/>
            <person name="Lewis L."/>
            <person name="Liao D."/>
            <person name="Mark M.R."/>
            <person name="Robbie E."/>
            <person name="Sanchez C."/>
            <person name="Schoenfeld J."/>
            <person name="Seshagiri S."/>
            <person name="Simmons L."/>
            <person name="Singh J."/>
            <person name="Smith V."/>
            <person name="Stinson J."/>
            <person name="Vagts A."/>
            <person name="Vandlen R.L."/>
            <person name="Watanabe C."/>
            <person name="Wieand D."/>
            <person name="Woods K."/>
            <person name="Xie M.-H."/>
            <person name="Yansura D.G."/>
            <person name="Yi S."/>
            <person name="Yu G."/>
            <person name="Yuan J."/>
            <person name="Zhang M."/>
            <person name="Zhang Z."/>
            <person name="Goddard A.D."/>
            <person name="Wood W.I."/>
            <person name="Godowski P.J."/>
            <person name="Gray A.M."/>
        </authorList>
    </citation>
    <scope>NUCLEOTIDE SEQUENCE [LARGE SCALE MRNA]</scope>
    <scope>VARIANT PRO-387</scope>
</reference>
<reference key="2">
    <citation type="journal article" date="2003" name="Nature">
        <title>The DNA sequence and analysis of human chromosome 6.</title>
        <authorList>
            <person name="Mungall A.J."/>
            <person name="Palmer S.A."/>
            <person name="Sims S.K."/>
            <person name="Edwards C.A."/>
            <person name="Ashurst J.L."/>
            <person name="Wilming L."/>
            <person name="Jones M.C."/>
            <person name="Horton R."/>
            <person name="Hunt S.E."/>
            <person name="Scott C.E."/>
            <person name="Gilbert J.G.R."/>
            <person name="Clamp M.E."/>
            <person name="Bethel G."/>
            <person name="Milne S."/>
            <person name="Ainscough R."/>
            <person name="Almeida J.P."/>
            <person name="Ambrose K.D."/>
            <person name="Andrews T.D."/>
            <person name="Ashwell R.I.S."/>
            <person name="Babbage A.K."/>
            <person name="Bagguley C.L."/>
            <person name="Bailey J."/>
            <person name="Banerjee R."/>
            <person name="Barker D.J."/>
            <person name="Barlow K.F."/>
            <person name="Bates K."/>
            <person name="Beare D.M."/>
            <person name="Beasley H."/>
            <person name="Beasley O."/>
            <person name="Bird C.P."/>
            <person name="Blakey S.E."/>
            <person name="Bray-Allen S."/>
            <person name="Brook J."/>
            <person name="Brown A.J."/>
            <person name="Brown J.Y."/>
            <person name="Burford D.C."/>
            <person name="Burrill W."/>
            <person name="Burton J."/>
            <person name="Carder C."/>
            <person name="Carter N.P."/>
            <person name="Chapman J.C."/>
            <person name="Clark S.Y."/>
            <person name="Clark G."/>
            <person name="Clee C.M."/>
            <person name="Clegg S."/>
            <person name="Cobley V."/>
            <person name="Collier R.E."/>
            <person name="Collins J.E."/>
            <person name="Colman L.K."/>
            <person name="Corby N.R."/>
            <person name="Coville G.J."/>
            <person name="Culley K.M."/>
            <person name="Dhami P."/>
            <person name="Davies J."/>
            <person name="Dunn M."/>
            <person name="Earthrowl M.E."/>
            <person name="Ellington A.E."/>
            <person name="Evans K.A."/>
            <person name="Faulkner L."/>
            <person name="Francis M.D."/>
            <person name="Frankish A."/>
            <person name="Frankland J."/>
            <person name="French L."/>
            <person name="Garner P."/>
            <person name="Garnett J."/>
            <person name="Ghori M.J."/>
            <person name="Gilby L.M."/>
            <person name="Gillson C.J."/>
            <person name="Glithero R.J."/>
            <person name="Grafham D.V."/>
            <person name="Grant M."/>
            <person name="Gribble S."/>
            <person name="Griffiths C."/>
            <person name="Griffiths M.N.D."/>
            <person name="Hall R."/>
            <person name="Halls K.S."/>
            <person name="Hammond S."/>
            <person name="Harley J.L."/>
            <person name="Hart E.A."/>
            <person name="Heath P.D."/>
            <person name="Heathcott R."/>
            <person name="Holmes S.J."/>
            <person name="Howden P.J."/>
            <person name="Howe K.L."/>
            <person name="Howell G.R."/>
            <person name="Huckle E."/>
            <person name="Humphray S.J."/>
            <person name="Humphries M.D."/>
            <person name="Hunt A.R."/>
            <person name="Johnson C.M."/>
            <person name="Joy A.A."/>
            <person name="Kay M."/>
            <person name="Keenan S.J."/>
            <person name="Kimberley A.M."/>
            <person name="King A."/>
            <person name="Laird G.K."/>
            <person name="Langford C."/>
            <person name="Lawlor S."/>
            <person name="Leongamornlert D.A."/>
            <person name="Leversha M."/>
            <person name="Lloyd C.R."/>
            <person name="Lloyd D.M."/>
            <person name="Loveland J.E."/>
            <person name="Lovell J."/>
            <person name="Martin S."/>
            <person name="Mashreghi-Mohammadi M."/>
            <person name="Maslen G.L."/>
            <person name="Matthews L."/>
            <person name="McCann O.T."/>
            <person name="McLaren S.J."/>
            <person name="McLay K."/>
            <person name="McMurray A."/>
            <person name="Moore M.J.F."/>
            <person name="Mullikin J.C."/>
            <person name="Niblett D."/>
            <person name="Nickerson T."/>
            <person name="Novik K.L."/>
            <person name="Oliver K."/>
            <person name="Overton-Larty E.K."/>
            <person name="Parker A."/>
            <person name="Patel R."/>
            <person name="Pearce A.V."/>
            <person name="Peck A.I."/>
            <person name="Phillimore B.J.C.T."/>
            <person name="Phillips S."/>
            <person name="Plumb R.W."/>
            <person name="Porter K.M."/>
            <person name="Ramsey Y."/>
            <person name="Ranby S.A."/>
            <person name="Rice C.M."/>
            <person name="Ross M.T."/>
            <person name="Searle S.M."/>
            <person name="Sehra H.K."/>
            <person name="Sheridan E."/>
            <person name="Skuce C.D."/>
            <person name="Smith S."/>
            <person name="Smith M."/>
            <person name="Spraggon L."/>
            <person name="Squares S.L."/>
            <person name="Steward C.A."/>
            <person name="Sycamore N."/>
            <person name="Tamlyn-Hall G."/>
            <person name="Tester J."/>
            <person name="Theaker A.J."/>
            <person name="Thomas D.W."/>
            <person name="Thorpe A."/>
            <person name="Tracey A."/>
            <person name="Tromans A."/>
            <person name="Tubby B."/>
            <person name="Wall M."/>
            <person name="Wallis J.M."/>
            <person name="West A.P."/>
            <person name="White S.S."/>
            <person name="Whitehead S.L."/>
            <person name="Whittaker H."/>
            <person name="Wild A."/>
            <person name="Willey D.J."/>
            <person name="Wilmer T.E."/>
            <person name="Wood J.M."/>
            <person name="Wray P.W."/>
            <person name="Wyatt J.C."/>
            <person name="Young L."/>
            <person name="Younger R.M."/>
            <person name="Bentley D.R."/>
            <person name="Coulson A."/>
            <person name="Durbin R.M."/>
            <person name="Hubbard T."/>
            <person name="Sulston J.E."/>
            <person name="Dunham I."/>
            <person name="Rogers J."/>
            <person name="Beck S."/>
        </authorList>
    </citation>
    <scope>NUCLEOTIDE SEQUENCE [LARGE SCALE GENOMIC DNA]</scope>
</reference>
<reference key="3">
    <citation type="journal article" date="2017" name="Nat. Med.">
        <title>GFRAL is the receptor for GDF15 and the ligand promotes weight loss in mice and nonhuman primates.</title>
        <authorList>
            <person name="Mullican S.E."/>
            <person name="Lin-Schmidt X."/>
            <person name="Chin C.N."/>
            <person name="Chavez J.A."/>
            <person name="Furman J.L."/>
            <person name="Armstrong A.A."/>
            <person name="Beck S.C."/>
            <person name="South V.J."/>
            <person name="Dinh T.Q."/>
            <person name="Cash-Mason T.D."/>
            <person name="Cavanaugh C.R."/>
            <person name="Nelson S."/>
            <person name="Huang C."/>
            <person name="Hunter M.J."/>
            <person name="Rangwala S.M."/>
        </authorList>
    </citation>
    <scope>FUNCTION</scope>
    <scope>TISSUE SPECIFICITY</scope>
    <scope>INTERACTION WITH GDF15 AND RET</scope>
</reference>
<reference key="4">
    <citation type="journal article" date="2017" name="Nat. Med.">
        <title>GFRAL is the receptor for GDF15 and is required for the anti-obesity effects of the ligand.</title>
        <authorList>
            <person name="Yang L."/>
            <person name="Chang C.C."/>
            <person name="Sun Z."/>
            <person name="Madsen D."/>
            <person name="Zhu H."/>
            <person name="Padkjaer S.B."/>
            <person name="Wu X."/>
            <person name="Huang T."/>
            <person name="Hultman K."/>
            <person name="Paulsen S.J."/>
            <person name="Wang J."/>
            <person name="Bugge A."/>
            <person name="Frantzen J.B."/>
            <person name="Noergaard P."/>
            <person name="Jeppesen J.F."/>
            <person name="Yang Z."/>
            <person name="Secher A."/>
            <person name="Chen H."/>
            <person name="Li X."/>
            <person name="John L.M."/>
            <person name="Shan B."/>
            <person name="He Z."/>
            <person name="Gao X."/>
            <person name="Su J."/>
            <person name="Hansen K.T."/>
            <person name="Yang W."/>
            <person name="Joergensen S.B."/>
        </authorList>
    </citation>
    <scope>FUNCTION</scope>
    <scope>INTERACTION WITH GDF15 AND RET</scope>
</reference>
<reference key="5">
    <citation type="journal article" date="2017" name="Nat. Med.">
        <title>The metabolic effects of GDF15 are mediated by the orphan receptor GFRAL.</title>
        <authorList>
            <person name="Emmerson P.J."/>
            <person name="Wang F."/>
            <person name="Du Y."/>
            <person name="Liu Q."/>
            <person name="Pickard R.T."/>
            <person name="Gonciarz M.D."/>
            <person name="Coskun T."/>
            <person name="Hamang M.J."/>
            <person name="Sindelar D.K."/>
            <person name="Ballman K.K."/>
            <person name="Foltz L.A."/>
            <person name="Muppidi A."/>
            <person name="Alsina-Fernandez J."/>
            <person name="Barnard G.C."/>
            <person name="Tang J.X."/>
            <person name="Liu X."/>
            <person name="Mao X."/>
            <person name="Siegel R."/>
            <person name="Sloan J.H."/>
            <person name="Mitchell P.J."/>
            <person name="Zhang B.B."/>
            <person name="Gimeno R.E."/>
            <person name="Shan B."/>
            <person name="Wu X."/>
        </authorList>
    </citation>
    <scope>FUNCTION</scope>
    <scope>INTERACTION WITH GDF15</scope>
    <scope>TISSUE SPECIFICITY</scope>
</reference>
<reference key="6">
    <citation type="journal article" date="2022" name="Nat. Metab.">
        <title>Body weight regulation via MT1-MMP-mediated cleavage of GFRAL.</title>
        <authorList>
            <person name="Chow C.F.W."/>
            <person name="Guo X."/>
            <person name="Asthana P."/>
            <person name="Zhang S."/>
            <person name="Wong S.K.K."/>
            <person name="Fallah S."/>
            <person name="Che S."/>
            <person name="Gurung S."/>
            <person name="Wang Z."/>
            <person name="Lee K.B."/>
            <person name="Ge X."/>
            <person name="Yuan S."/>
            <person name="Xu H."/>
            <person name="Ip J.P.K."/>
            <person name="Jiang Z."/>
            <person name="Zhai L."/>
            <person name="Wu J."/>
            <person name="Zhang Y."/>
            <person name="Mahato A.K."/>
            <person name="Saarma M."/>
            <person name="Lin C.Y."/>
            <person name="Kwan H.Y."/>
            <person name="Huang T."/>
            <person name="Lyu A."/>
            <person name="Zhou Z."/>
            <person name="Bian Z.X."/>
            <person name="Wong H.L.X."/>
        </authorList>
    </citation>
    <scope>PROTEOLYTIC CLEAVAGE</scope>
</reference>
<reference key="7">
    <citation type="journal article" date="2023" name="Cell Metab.">
        <title>Discovery, development, and clinical proof of mechanism of LY3463251, a long-acting GDF15 receptor agonist.</title>
        <authorList>
            <person name="Benichou O."/>
            <person name="Coskun T."/>
            <person name="Gonciarz M.D."/>
            <person name="Garhyan P."/>
            <person name="Adams A.C."/>
            <person name="Du Y."/>
            <person name="Dunbar J.D."/>
            <person name="Martin J.A."/>
            <person name="Mather K.J."/>
            <person name="Pickard R.T."/>
            <person name="Reynolds V.L."/>
            <person name="Robins D.A."/>
            <person name="Zvada S.P."/>
            <person name="Emmerson P.J."/>
        </authorList>
    </citation>
    <scope>FUNCTION</scope>
    <scope>ACTIVITY REGULATION</scope>
</reference>
<reference evidence="17" key="8">
    <citation type="journal article" date="2017" name="Nature">
        <title>Non-homeostatic body weight regulation through a brainstem-restricted receptor for GDF15.</title>
        <authorList>
            <person name="Hsu J.Y."/>
            <person name="Crawley S."/>
            <person name="Chen M."/>
            <person name="Ayupova D.A."/>
            <person name="Lindhout D.A."/>
            <person name="Higbee J."/>
            <person name="Kutach A."/>
            <person name="Joo W."/>
            <person name="Gao Z."/>
            <person name="Fu D."/>
            <person name="To C."/>
            <person name="Mondal K."/>
            <person name="Li B."/>
            <person name="Kekatpure A."/>
            <person name="Wang M."/>
            <person name="Laird T."/>
            <person name="Horner G."/>
            <person name="Chan J."/>
            <person name="McEntee M."/>
            <person name="Lopez M."/>
            <person name="Lakshminarasimhan D."/>
            <person name="White A."/>
            <person name="Wang S.P."/>
            <person name="Yao J."/>
            <person name="Yie J."/>
            <person name="Matern H."/>
            <person name="Solloway M."/>
            <person name="Haldankar R."/>
            <person name="Parsons T."/>
            <person name="Tang J."/>
            <person name="Shen W.D."/>
            <person name="Alice Chen Y."/>
            <person name="Tian H."/>
            <person name="Allan B.B."/>
        </authorList>
    </citation>
    <scope>X-RAY CRYSTALLOGRAPHY (2.20 ANGSTROMS) OF 115-351 IN COMPLEX WITH GDF15</scope>
    <scope>INTERACTION WITH GDF15 AND RET</scope>
    <scope>SUBCELLULAR LOCATION</scope>
    <scope>FUNCTION</scope>
</reference>
<reference key="9">
    <citation type="journal article" date="2017" name="Nature">
        <title>Non-homeostatic body weight regulation through a brainstem-restricted receptor for GDF15.</title>
        <authorList>
            <person name="Hsu J.Y."/>
            <person name="Crawley S."/>
            <person name="Chen M."/>
            <person name="Ayupova D.A."/>
            <person name="Lindhout D.A."/>
            <person name="Higbee J."/>
            <person name="Kutach A."/>
            <person name="Joo W."/>
            <person name="Gao Z."/>
            <person name="Fu D."/>
            <person name="To C."/>
            <person name="Mondal K."/>
            <person name="Li B."/>
            <person name="Kekatpure A."/>
            <person name="Wang M."/>
            <person name="Laird T."/>
            <person name="Horner G."/>
            <person name="Chan J."/>
            <person name="McEntee M."/>
            <person name="Lopez M."/>
            <person name="Lakshminarasimhan D."/>
            <person name="White A."/>
            <person name="Wang S.P."/>
            <person name="Yao J."/>
            <person name="Yie J."/>
            <person name="Matern H."/>
            <person name="Solloway M."/>
            <person name="Haldankar R."/>
            <person name="Parsons T."/>
            <person name="Tang J."/>
            <person name="Shen W.D."/>
            <person name="Alice Chen Y."/>
            <person name="Tian H."/>
            <person name="Allan B.B."/>
        </authorList>
    </citation>
    <scope>ERRATUM OF PUBMED:28953886</scope>
</reference>
<reference evidence="18" key="10">
    <citation type="journal article" date="2019" name="Elife">
        <title>Cryo-EM analyses reveal the common mechanism and diversification in the activation of RET by different ligands.</title>
        <authorList>
            <person name="Li J."/>
            <person name="Shang G."/>
            <person name="Chen Y.J."/>
            <person name="Brautigam C.A."/>
            <person name="Liou J."/>
            <person name="Zhang X."/>
            <person name="Bai X.C."/>
        </authorList>
    </citation>
    <scope>STRUCTURE BY ELECTRON MICROSCOPY (4.10 ANGSTROMS) OF 20-352 IN COMPLEX WITH GDF15 AND RET</scope>
    <scope>FUNCTION</scope>
    <scope>SUBUNIT</scope>
    <scope>DISULFIDE BONDS</scope>
    <scope>INTERACTION WITH GDF15</scope>
    <scope>MUTAGENESIS OF THR-261</scope>
</reference>
<reference evidence="19" key="11">
    <citation type="journal article" date="2020" name="Nat. Med.">
        <title>Antibody-mediated inhibition of GDF15-GFRAL activity reverses cancer cachexia in mice.</title>
        <authorList>
            <person name="Suriben R."/>
            <person name="Chen M."/>
            <person name="Higbee J."/>
            <person name="Oeffinger J."/>
            <person name="Ventura R."/>
            <person name="Li B."/>
            <person name="Mondal K."/>
            <person name="Gao Z."/>
            <person name="Ayupova D."/>
            <person name="Taskar P."/>
            <person name="Li D."/>
            <person name="Starck S.R."/>
            <person name="Chen H.H."/>
            <person name="McEntee M."/>
            <person name="Katewa S.D."/>
            <person name="Phung V."/>
            <person name="Wang M."/>
            <person name="Kekatpure A."/>
            <person name="Lakshminarasimhan D."/>
            <person name="White A."/>
            <person name="Olland A."/>
            <person name="Haldankar R."/>
            <person name="Solloway M.J."/>
            <person name="Hsu J.Y."/>
            <person name="Wang Y."/>
            <person name="Tang J."/>
            <person name="Lindhout D.A."/>
            <person name="Allan B.B."/>
        </authorList>
    </citation>
    <scope>X-RAY CRYSTALLOGRAPHY (2.91 ANGSTROMS) OF 115-351 IN COMPLEX WITH 3P10 MONOCLONAL ANTIBODY</scope>
    <scope>FUNCTION</scope>
    <scope>ACTIVITY REGULATION</scope>
    <scope>DISULFIDE BONDS</scope>
</reference>
<reference key="12">
    <citation type="journal article" date="2006" name="Science">
        <title>The consensus coding sequences of human breast and colorectal cancers.</title>
        <authorList>
            <person name="Sjoeblom T."/>
            <person name="Jones S."/>
            <person name="Wood L.D."/>
            <person name="Parsons D.W."/>
            <person name="Lin J."/>
            <person name="Barber T.D."/>
            <person name="Mandelker D."/>
            <person name="Leary R.J."/>
            <person name="Ptak J."/>
            <person name="Silliman N."/>
            <person name="Szabo S."/>
            <person name="Buckhaults P."/>
            <person name="Farrell C."/>
            <person name="Meeh P."/>
            <person name="Markowitz S.D."/>
            <person name="Willis J."/>
            <person name="Dawson D."/>
            <person name="Willson J.K.V."/>
            <person name="Gazdar A.F."/>
            <person name="Hartigan J."/>
            <person name="Wu L."/>
            <person name="Liu C."/>
            <person name="Parmigiani G."/>
            <person name="Park B.H."/>
            <person name="Bachman K.E."/>
            <person name="Papadopoulos N."/>
            <person name="Vogelstein B."/>
            <person name="Kinzler K.W."/>
            <person name="Velculescu V.E."/>
        </authorList>
    </citation>
    <scope>VARIANT [LARGE SCALE ANALYSIS] HIS-195</scope>
</reference>
<evidence type="ECO:0000250" key="1">
    <source>
        <dbReference type="UniProtKB" id="Q6SJE0"/>
    </source>
</evidence>
<evidence type="ECO:0000255" key="2"/>
<evidence type="ECO:0000269" key="3">
    <source>
    </source>
</evidence>
<evidence type="ECO:0000269" key="4">
    <source>
    </source>
</evidence>
<evidence type="ECO:0000269" key="5">
    <source>
    </source>
</evidence>
<evidence type="ECO:0000269" key="6">
    <source>
    </source>
</evidence>
<evidence type="ECO:0000269" key="7">
    <source>
    </source>
</evidence>
<evidence type="ECO:0000269" key="8">
    <source>
    </source>
</evidence>
<evidence type="ECO:0000269" key="9">
    <source>
    </source>
</evidence>
<evidence type="ECO:0000269" key="10">
    <source>
    </source>
</evidence>
<evidence type="ECO:0000269" key="11">
    <source>
    </source>
</evidence>
<evidence type="ECO:0000269" key="12">
    <source>
    </source>
</evidence>
<evidence type="ECO:0000303" key="13">
    <source>
    </source>
</evidence>
<evidence type="ECO:0000303" key="14">
    <source>
    </source>
</evidence>
<evidence type="ECO:0000305" key="15"/>
<evidence type="ECO:0000312" key="16">
    <source>
        <dbReference type="HGNC" id="HGNC:32789"/>
    </source>
</evidence>
<evidence type="ECO:0007744" key="17">
    <source>
        <dbReference type="PDB" id="5VZ4"/>
    </source>
</evidence>
<evidence type="ECO:0007744" key="18">
    <source>
        <dbReference type="PDB" id="6Q2J"/>
    </source>
</evidence>
<evidence type="ECO:0007744" key="19">
    <source>
        <dbReference type="PDB" id="6WMW"/>
    </source>
</evidence>
<evidence type="ECO:0007829" key="20">
    <source>
        <dbReference type="PDB" id="5VZ4"/>
    </source>
</evidence>
<evidence type="ECO:0007829" key="21">
    <source>
        <dbReference type="PDB" id="6WMW"/>
    </source>
</evidence>